<dbReference type="EC" id="2.4.1.12" evidence="14"/>
<dbReference type="EMBL" id="AF027173">
    <property type="protein sequence ID" value="AAC39335.1"/>
    <property type="molecule type" value="mRNA"/>
</dbReference>
<dbReference type="EMBL" id="AL050351">
    <property type="protein sequence ID" value="CAB43650.1"/>
    <property type="molecule type" value="Genomic_DNA"/>
</dbReference>
<dbReference type="EMBL" id="AL161595">
    <property type="protein sequence ID" value="CAB80598.1"/>
    <property type="molecule type" value="Genomic_DNA"/>
</dbReference>
<dbReference type="EMBL" id="CP002687">
    <property type="protein sequence ID" value="AEE87059.1"/>
    <property type="molecule type" value="Genomic_DNA"/>
</dbReference>
<dbReference type="EMBL" id="AY059858">
    <property type="protein sequence ID" value="AAL24340.1"/>
    <property type="status" value="ALT_INIT"/>
    <property type="molecule type" value="mRNA"/>
</dbReference>
<dbReference type="EMBL" id="AY093308">
    <property type="protein sequence ID" value="AAM13307.1"/>
    <property type="molecule type" value="mRNA"/>
</dbReference>
<dbReference type="PIR" id="T08583">
    <property type="entry name" value="T08583"/>
</dbReference>
<dbReference type="RefSeq" id="NP_195645.1">
    <property type="nucleotide sequence ID" value="NM_120095.4"/>
</dbReference>
<dbReference type="SMR" id="O48947"/>
<dbReference type="BioGRID" id="15370">
    <property type="interactions" value="18"/>
</dbReference>
<dbReference type="FunCoup" id="O48947">
    <property type="interactions" value="275"/>
</dbReference>
<dbReference type="IntAct" id="O48947">
    <property type="interactions" value="17"/>
</dbReference>
<dbReference type="STRING" id="3702.O48947"/>
<dbReference type="CAZy" id="GT2">
    <property type="family name" value="Glycosyltransferase Family 2"/>
</dbReference>
<dbReference type="GlyCosmos" id="O48947">
    <property type="glycosylation" value="1 site, No reported glycans"/>
</dbReference>
<dbReference type="GlyGen" id="O48947">
    <property type="glycosylation" value="1 site"/>
</dbReference>
<dbReference type="iPTMnet" id="O48947"/>
<dbReference type="PaxDb" id="3702-AT4G39350.1"/>
<dbReference type="ProteomicsDB" id="220608"/>
<dbReference type="EnsemblPlants" id="AT4G39350.1">
    <property type="protein sequence ID" value="AT4G39350.1"/>
    <property type="gene ID" value="AT4G39350"/>
</dbReference>
<dbReference type="GeneID" id="830090"/>
<dbReference type="Gramene" id="AT4G39350.1">
    <property type="protein sequence ID" value="AT4G39350.1"/>
    <property type="gene ID" value="AT4G39350"/>
</dbReference>
<dbReference type="KEGG" id="ath:AT4G39350"/>
<dbReference type="Araport" id="AT4G39350"/>
<dbReference type="TAIR" id="AT4G39350">
    <property type="gene designation" value="CESA2"/>
</dbReference>
<dbReference type="eggNOG" id="ENOG502QQGG">
    <property type="taxonomic scope" value="Eukaryota"/>
</dbReference>
<dbReference type="HOGENOM" id="CLU_001418_0_0_1"/>
<dbReference type="InParanoid" id="O48947"/>
<dbReference type="OMA" id="ICGLNCG"/>
<dbReference type="PhylomeDB" id="O48947"/>
<dbReference type="BioCyc" id="ARA:AT4G39350-MONOMER"/>
<dbReference type="UniPathway" id="UPA00695"/>
<dbReference type="PRO" id="PR:O48947"/>
<dbReference type="Proteomes" id="UP000006548">
    <property type="component" value="Chromosome 4"/>
</dbReference>
<dbReference type="ExpressionAtlas" id="O48947">
    <property type="expression patterns" value="baseline and differential"/>
</dbReference>
<dbReference type="GO" id="GO:0005886">
    <property type="term" value="C:plasma membrane"/>
    <property type="evidence" value="ECO:0007669"/>
    <property type="project" value="UniProtKB-SubCell"/>
</dbReference>
<dbReference type="GO" id="GO:0016760">
    <property type="term" value="F:cellulose synthase (UDP-forming) activity"/>
    <property type="evidence" value="ECO:0007669"/>
    <property type="project" value="UniProtKB-EC"/>
</dbReference>
<dbReference type="GO" id="GO:0008270">
    <property type="term" value="F:zinc ion binding"/>
    <property type="evidence" value="ECO:0007669"/>
    <property type="project" value="UniProtKB-KW"/>
</dbReference>
<dbReference type="GO" id="GO:0071555">
    <property type="term" value="P:cell wall organization"/>
    <property type="evidence" value="ECO:0007669"/>
    <property type="project" value="UniProtKB-KW"/>
</dbReference>
<dbReference type="GO" id="GO:0030244">
    <property type="term" value="P:cellulose biosynthetic process"/>
    <property type="evidence" value="ECO:0007669"/>
    <property type="project" value="UniProtKB-KW"/>
</dbReference>
<dbReference type="CDD" id="cd16617">
    <property type="entry name" value="mRING-HC-C4C4_CesA"/>
    <property type="match status" value="1"/>
</dbReference>
<dbReference type="FunFam" id="3.30.40.10:FF:000031">
    <property type="entry name" value="Cellulose synthase"/>
    <property type="match status" value="1"/>
</dbReference>
<dbReference type="FunFam" id="3.90.550.10:FF:000009">
    <property type="entry name" value="Cellulose synthase"/>
    <property type="match status" value="1"/>
</dbReference>
<dbReference type="Gene3D" id="3.90.550.10">
    <property type="entry name" value="Spore Coat Polysaccharide Biosynthesis Protein SpsA, Chain A"/>
    <property type="match status" value="1"/>
</dbReference>
<dbReference type="Gene3D" id="3.30.40.10">
    <property type="entry name" value="Zinc/RING finger domain, C3HC4 (zinc finger)"/>
    <property type="match status" value="1"/>
</dbReference>
<dbReference type="InterPro" id="IPR005150">
    <property type="entry name" value="Cellulose_synth"/>
</dbReference>
<dbReference type="InterPro" id="IPR027934">
    <property type="entry name" value="CES_Znf_RING"/>
</dbReference>
<dbReference type="InterPro" id="IPR029044">
    <property type="entry name" value="Nucleotide-diphossugar_trans"/>
</dbReference>
<dbReference type="InterPro" id="IPR001841">
    <property type="entry name" value="Znf_RING"/>
</dbReference>
<dbReference type="InterPro" id="IPR013083">
    <property type="entry name" value="Znf_RING/FYVE/PHD"/>
</dbReference>
<dbReference type="PANTHER" id="PTHR13301">
    <property type="entry name" value="X-BOX TRANSCRIPTION FACTOR-RELATED"/>
    <property type="match status" value="1"/>
</dbReference>
<dbReference type="Pfam" id="PF03552">
    <property type="entry name" value="Cellulose_synt"/>
    <property type="match status" value="1"/>
</dbReference>
<dbReference type="Pfam" id="PF14569">
    <property type="entry name" value="zf-UDP"/>
    <property type="match status" value="1"/>
</dbReference>
<dbReference type="SUPFAM" id="SSF53448">
    <property type="entry name" value="Nucleotide-diphospho-sugar transferases"/>
    <property type="match status" value="1"/>
</dbReference>
<dbReference type="SUPFAM" id="SSF57850">
    <property type="entry name" value="RING/U-box"/>
    <property type="match status" value="1"/>
</dbReference>
<dbReference type="PROSITE" id="PS50089">
    <property type="entry name" value="ZF_RING_2"/>
    <property type="match status" value="1"/>
</dbReference>
<evidence type="ECO:0000250" key="1">
    <source>
        <dbReference type="UniProtKB" id="O48946"/>
    </source>
</evidence>
<evidence type="ECO:0000250" key="2">
    <source>
        <dbReference type="UniProtKB" id="Q941L0"/>
    </source>
</evidence>
<evidence type="ECO:0000250" key="3">
    <source>
        <dbReference type="UniProtKB" id="Q9SWW6"/>
    </source>
</evidence>
<evidence type="ECO:0000255" key="4"/>
<evidence type="ECO:0000255" key="5">
    <source>
        <dbReference type="PROSITE-ProRule" id="PRU00175"/>
    </source>
</evidence>
<evidence type="ECO:0000255" key="6">
    <source>
        <dbReference type="PROSITE-ProRule" id="PRU00498"/>
    </source>
</evidence>
<evidence type="ECO:0000256" key="7">
    <source>
        <dbReference type="SAM" id="MobiDB-lite"/>
    </source>
</evidence>
<evidence type="ECO:0000269" key="8">
    <source>
    </source>
</evidence>
<evidence type="ECO:0000269" key="9">
    <source>
    </source>
</evidence>
<evidence type="ECO:0000269" key="10">
    <source>
    </source>
</evidence>
<evidence type="ECO:0000269" key="11">
    <source>
    </source>
</evidence>
<evidence type="ECO:0000269" key="12">
    <source>
    </source>
</evidence>
<evidence type="ECO:0000303" key="13">
    <source>
    </source>
</evidence>
<evidence type="ECO:0000305" key="14"/>
<evidence type="ECO:0000305" key="15">
    <source>
    </source>
</evidence>
<evidence type="ECO:0000312" key="16">
    <source>
        <dbReference type="Araport" id="AT4G39350"/>
    </source>
</evidence>
<evidence type="ECO:0000312" key="17">
    <source>
        <dbReference type="EMBL" id="CAB43650.1"/>
    </source>
</evidence>
<gene>
    <name evidence="13" type="primary">CESA2</name>
    <name type="synonym">ATHA</name>
    <name evidence="16" type="ordered locus">At4g39350</name>
    <name evidence="17" type="ORF">T22F8.250</name>
</gene>
<protein>
    <recommendedName>
        <fullName evidence="13">Cellulose synthase A catalytic subunit 2 [UDP-forming]</fullName>
        <shortName evidence="13">AtCesA2</shortName>
        <shortName evidence="13">Ath-A</shortName>
        <ecNumber evidence="14">2.4.1.12</ecNumber>
    </recommendedName>
</protein>
<proteinExistence type="evidence at protein level"/>
<organism>
    <name type="scientific">Arabidopsis thaliana</name>
    <name type="common">Mouse-ear cress</name>
    <dbReference type="NCBI Taxonomy" id="3702"/>
    <lineage>
        <taxon>Eukaryota</taxon>
        <taxon>Viridiplantae</taxon>
        <taxon>Streptophyta</taxon>
        <taxon>Embryophyta</taxon>
        <taxon>Tracheophyta</taxon>
        <taxon>Spermatophyta</taxon>
        <taxon>Magnoliopsida</taxon>
        <taxon>eudicotyledons</taxon>
        <taxon>Gunneridae</taxon>
        <taxon>Pentapetalae</taxon>
        <taxon>rosids</taxon>
        <taxon>malvids</taxon>
        <taxon>Brassicales</taxon>
        <taxon>Brassicaceae</taxon>
        <taxon>Camelineae</taxon>
        <taxon>Arabidopsis</taxon>
    </lineage>
</organism>
<name>CESA2_ARATH</name>
<accession>O48947</accession>
<accession>Q93YP8</accession>
<sequence length="1084" mass="122069">MNTGGRLIAGSHNRNEFVLINADESARIRSVQELSGQTCQICGDEIELTVSSELFVACNECAFPVCRPCYEYERREGNQACPQCKTRYKRIKGSPRVDGDDEEEEDIDDLEYEFDHGMDPEHAAEAALSSRLNTGRGGLDSAPPGSQIPLLTYCDEDADMYSDRHALIVPPSTGYGNRVYPAPFTDSSAPPQARSMVPQKDIAEYGYGSVAWKDRMEVWKRRQGEKLQVIKHEGGNNGRGSNDDDELDDPDMPMMDEGRQPLSRKLPIRSSRINPYRMLILCRLAILGLFFHYRILHPVNDAYGLWLTSVICEIWFAVSWILDQFPKWYPIERETYLDRLSLRYEKEGKPSGLAPVDVFVSTVDPLKEPPLITANTVLSILAVDYPVDKVACYVSDDGAAMLTFEALSDTAEFARKWVPFCKKFNIEPRAPEWYFSQKMDYLKNKVHPAFVRERRAMKRDYEEFKVKINALVATAQKVPEEGWTMQDGTPWPGNNVRDHPGMIQVFLGHSGVRDTDGNELPRLVYVSREKRPGFDHHKKAGAMNSLIRVSAVLSNAPYLLNVDCDHYINNSKAIRESMCFMMDPQSGKKVCYVQFPQRFDGIDRHDRYSNRNVVFFDINMKGLDGIQGPIYVGTGCVFRRQALYGFDAPKKKKPPGKTCNCWPKWCCLCCGLRKKSKTKAKDKKTNTKETSKQIHALENVDEGVIVPVSNVEKRSEATQLKLEKKFGQSPVFVASAVLQNGGVPRNASPACLLREAIQVISCGYEDKTEWGKEIGWIYGSVTEDILTGFKMHCHGWRSVYCMPKRAAFKGSAPINLSDRLHQVLRWALGSVEIFLSRHCPIWYGYGGGLKWLERFSYINSVVYPWTSLPLIVYCSLPAVCLLTGKFIVPEISNYAGILFMLMFISIAVTGILEMQWGGVGIDDWWRNEQFWVIGGASSHLFALFQGLLKVLAGVNTNFTVTSKAADDGAFSELYIFKWTTLLIPPTTLLIINIIGVIVGVSDAISNGYDSWGPLFGRLFFALWVIVHLYPFLKGMLGKQDKMPTIIVVWSILLASILTLLWVRVNPFVAKGGPVLEICGLNCGN</sequence>
<reference key="1">
    <citation type="journal article" date="1998" name="Science">
        <title>Molecular analysis of cellulose biosynthesis in Arabidopsis.</title>
        <authorList>
            <person name="Arioli T."/>
            <person name="Peng L."/>
            <person name="Betzner A.S."/>
            <person name="Burn J."/>
            <person name="Wittke W."/>
            <person name="Herth W."/>
            <person name="Camilleri C."/>
            <person name="Hoefte H."/>
            <person name="Plazinski J."/>
            <person name="Birch R."/>
            <person name="Cork A."/>
            <person name="Glover J."/>
            <person name="Redmond J."/>
            <person name="Williamson R.E."/>
        </authorList>
    </citation>
    <scope>NUCLEOTIDE SEQUENCE [MRNA]</scope>
    <source>
        <strain>cv. Columbia</strain>
    </source>
</reference>
<reference key="2">
    <citation type="journal article" date="1999" name="Nature">
        <title>Sequence and analysis of chromosome 4 of the plant Arabidopsis thaliana.</title>
        <authorList>
            <person name="Mayer K.F.X."/>
            <person name="Schueller C."/>
            <person name="Wambutt R."/>
            <person name="Murphy G."/>
            <person name="Volckaert G."/>
            <person name="Pohl T."/>
            <person name="Duesterhoeft A."/>
            <person name="Stiekema W."/>
            <person name="Entian K.-D."/>
            <person name="Terryn N."/>
            <person name="Harris B."/>
            <person name="Ansorge W."/>
            <person name="Brandt P."/>
            <person name="Grivell L.A."/>
            <person name="Rieger M."/>
            <person name="Weichselgartner M."/>
            <person name="de Simone V."/>
            <person name="Obermaier B."/>
            <person name="Mache R."/>
            <person name="Mueller M."/>
            <person name="Kreis M."/>
            <person name="Delseny M."/>
            <person name="Puigdomenech P."/>
            <person name="Watson M."/>
            <person name="Schmidtheini T."/>
            <person name="Reichert B."/>
            <person name="Portetelle D."/>
            <person name="Perez-Alonso M."/>
            <person name="Boutry M."/>
            <person name="Bancroft I."/>
            <person name="Vos P."/>
            <person name="Hoheisel J."/>
            <person name="Zimmermann W."/>
            <person name="Wedler H."/>
            <person name="Ridley P."/>
            <person name="Langham S.-A."/>
            <person name="McCullagh B."/>
            <person name="Bilham L."/>
            <person name="Robben J."/>
            <person name="van der Schueren J."/>
            <person name="Grymonprez B."/>
            <person name="Chuang Y.-J."/>
            <person name="Vandenbussche F."/>
            <person name="Braeken M."/>
            <person name="Weltjens I."/>
            <person name="Voet M."/>
            <person name="Bastiaens I."/>
            <person name="Aert R."/>
            <person name="Defoor E."/>
            <person name="Weitzenegger T."/>
            <person name="Bothe G."/>
            <person name="Ramsperger U."/>
            <person name="Hilbert H."/>
            <person name="Braun M."/>
            <person name="Holzer E."/>
            <person name="Brandt A."/>
            <person name="Peters S."/>
            <person name="van Staveren M."/>
            <person name="Dirkse W."/>
            <person name="Mooijman P."/>
            <person name="Klein Lankhorst R."/>
            <person name="Rose M."/>
            <person name="Hauf J."/>
            <person name="Koetter P."/>
            <person name="Berneiser S."/>
            <person name="Hempel S."/>
            <person name="Feldpausch M."/>
            <person name="Lamberth S."/>
            <person name="Van den Daele H."/>
            <person name="De Keyser A."/>
            <person name="Buysshaert C."/>
            <person name="Gielen J."/>
            <person name="Villarroel R."/>
            <person name="De Clercq R."/>
            <person name="van Montagu M."/>
            <person name="Rogers J."/>
            <person name="Cronin A."/>
            <person name="Quail M.A."/>
            <person name="Bray-Allen S."/>
            <person name="Clark L."/>
            <person name="Doggett J."/>
            <person name="Hall S."/>
            <person name="Kay M."/>
            <person name="Lennard N."/>
            <person name="McLay K."/>
            <person name="Mayes R."/>
            <person name="Pettett A."/>
            <person name="Rajandream M.A."/>
            <person name="Lyne M."/>
            <person name="Benes V."/>
            <person name="Rechmann S."/>
            <person name="Borkova D."/>
            <person name="Bloecker H."/>
            <person name="Scharfe M."/>
            <person name="Grimm M."/>
            <person name="Loehnert T.-H."/>
            <person name="Dose S."/>
            <person name="de Haan M."/>
            <person name="Maarse A.C."/>
            <person name="Schaefer M."/>
            <person name="Mueller-Auer S."/>
            <person name="Gabel C."/>
            <person name="Fuchs M."/>
            <person name="Fartmann B."/>
            <person name="Granderath K."/>
            <person name="Dauner D."/>
            <person name="Herzl A."/>
            <person name="Neumann S."/>
            <person name="Argiriou A."/>
            <person name="Vitale D."/>
            <person name="Liguori R."/>
            <person name="Piravandi E."/>
            <person name="Massenet O."/>
            <person name="Quigley F."/>
            <person name="Clabauld G."/>
            <person name="Muendlein A."/>
            <person name="Felber R."/>
            <person name="Schnabl S."/>
            <person name="Hiller R."/>
            <person name="Schmidt W."/>
            <person name="Lecharny A."/>
            <person name="Aubourg S."/>
            <person name="Chefdor F."/>
            <person name="Cooke R."/>
            <person name="Berger C."/>
            <person name="Monfort A."/>
            <person name="Casacuberta E."/>
            <person name="Gibbons T."/>
            <person name="Weber N."/>
            <person name="Vandenbol M."/>
            <person name="Bargues M."/>
            <person name="Terol J."/>
            <person name="Torres A."/>
            <person name="Perez-Perez A."/>
            <person name="Purnelle B."/>
            <person name="Bent E."/>
            <person name="Johnson S."/>
            <person name="Tacon D."/>
            <person name="Jesse T."/>
            <person name="Heijnen L."/>
            <person name="Schwarz S."/>
            <person name="Scholler P."/>
            <person name="Heber S."/>
            <person name="Francs P."/>
            <person name="Bielke C."/>
            <person name="Frishman D."/>
            <person name="Haase D."/>
            <person name="Lemcke K."/>
            <person name="Mewes H.-W."/>
            <person name="Stocker S."/>
            <person name="Zaccaria P."/>
            <person name="Bevan M."/>
            <person name="Wilson R.K."/>
            <person name="de la Bastide M."/>
            <person name="Habermann K."/>
            <person name="Parnell L."/>
            <person name="Dedhia N."/>
            <person name="Gnoj L."/>
            <person name="Schutz K."/>
            <person name="Huang E."/>
            <person name="Spiegel L."/>
            <person name="Sekhon M."/>
            <person name="Murray J."/>
            <person name="Sheet P."/>
            <person name="Cordes M."/>
            <person name="Abu-Threideh J."/>
            <person name="Stoneking T."/>
            <person name="Kalicki J."/>
            <person name="Graves T."/>
            <person name="Harmon G."/>
            <person name="Edwards J."/>
            <person name="Latreille P."/>
            <person name="Courtney L."/>
            <person name="Cloud J."/>
            <person name="Abbott A."/>
            <person name="Scott K."/>
            <person name="Johnson D."/>
            <person name="Minx P."/>
            <person name="Bentley D."/>
            <person name="Fulton B."/>
            <person name="Miller N."/>
            <person name="Greco T."/>
            <person name="Kemp K."/>
            <person name="Kramer J."/>
            <person name="Fulton L."/>
            <person name="Mardis E."/>
            <person name="Dante M."/>
            <person name="Pepin K."/>
            <person name="Hillier L.W."/>
            <person name="Nelson J."/>
            <person name="Spieth J."/>
            <person name="Ryan E."/>
            <person name="Andrews S."/>
            <person name="Geisel C."/>
            <person name="Layman D."/>
            <person name="Du H."/>
            <person name="Ali J."/>
            <person name="Berghoff A."/>
            <person name="Jones K."/>
            <person name="Drone K."/>
            <person name="Cotton M."/>
            <person name="Joshu C."/>
            <person name="Antonoiu B."/>
            <person name="Zidanic M."/>
            <person name="Strong C."/>
            <person name="Sun H."/>
            <person name="Lamar B."/>
            <person name="Yordan C."/>
            <person name="Ma P."/>
            <person name="Zhong J."/>
            <person name="Preston R."/>
            <person name="Vil D."/>
            <person name="Shekher M."/>
            <person name="Matero A."/>
            <person name="Shah R."/>
            <person name="Swaby I.K."/>
            <person name="O'Shaughnessy A."/>
            <person name="Rodriguez M."/>
            <person name="Hoffman J."/>
            <person name="Till S."/>
            <person name="Granat S."/>
            <person name="Shohdy N."/>
            <person name="Hasegawa A."/>
            <person name="Hameed A."/>
            <person name="Lodhi M."/>
            <person name="Johnson A."/>
            <person name="Chen E."/>
            <person name="Marra M.A."/>
            <person name="Martienssen R."/>
            <person name="McCombie W.R."/>
        </authorList>
    </citation>
    <scope>NUCLEOTIDE SEQUENCE [LARGE SCALE GENOMIC DNA]</scope>
    <source>
        <strain>cv. Columbia</strain>
    </source>
</reference>
<reference key="3">
    <citation type="journal article" date="2017" name="Plant J.">
        <title>Araport11: a complete reannotation of the Arabidopsis thaliana reference genome.</title>
        <authorList>
            <person name="Cheng C.Y."/>
            <person name="Krishnakumar V."/>
            <person name="Chan A.P."/>
            <person name="Thibaud-Nissen F."/>
            <person name="Schobel S."/>
            <person name="Town C.D."/>
        </authorList>
    </citation>
    <scope>GENOME REANNOTATION</scope>
    <source>
        <strain>cv. Columbia</strain>
    </source>
</reference>
<reference key="4">
    <citation type="journal article" date="2003" name="Science">
        <title>Empirical analysis of transcriptional activity in the Arabidopsis genome.</title>
        <authorList>
            <person name="Yamada K."/>
            <person name="Lim J."/>
            <person name="Dale J.M."/>
            <person name="Chen H."/>
            <person name="Shinn P."/>
            <person name="Palm C.J."/>
            <person name="Southwick A.M."/>
            <person name="Wu H.C."/>
            <person name="Kim C.J."/>
            <person name="Nguyen M."/>
            <person name="Pham P.K."/>
            <person name="Cheuk R.F."/>
            <person name="Karlin-Newmann G."/>
            <person name="Liu S.X."/>
            <person name="Lam B."/>
            <person name="Sakano H."/>
            <person name="Wu T."/>
            <person name="Yu G."/>
            <person name="Miranda M."/>
            <person name="Quach H.L."/>
            <person name="Tripp M."/>
            <person name="Chang C.H."/>
            <person name="Lee J.M."/>
            <person name="Toriumi M.J."/>
            <person name="Chan M.M."/>
            <person name="Tang C.C."/>
            <person name="Onodera C.S."/>
            <person name="Deng J.M."/>
            <person name="Akiyama K."/>
            <person name="Ansari Y."/>
            <person name="Arakawa T."/>
            <person name="Banh J."/>
            <person name="Banno F."/>
            <person name="Bowser L."/>
            <person name="Brooks S.Y."/>
            <person name="Carninci P."/>
            <person name="Chao Q."/>
            <person name="Choy N."/>
            <person name="Enju A."/>
            <person name="Goldsmith A.D."/>
            <person name="Gurjal M."/>
            <person name="Hansen N.F."/>
            <person name="Hayashizaki Y."/>
            <person name="Johnson-Hopson C."/>
            <person name="Hsuan V.W."/>
            <person name="Iida K."/>
            <person name="Karnes M."/>
            <person name="Khan S."/>
            <person name="Koesema E."/>
            <person name="Ishida J."/>
            <person name="Jiang P.X."/>
            <person name="Jones T."/>
            <person name="Kawai J."/>
            <person name="Kamiya A."/>
            <person name="Meyers C."/>
            <person name="Nakajima M."/>
            <person name="Narusaka M."/>
            <person name="Seki M."/>
            <person name="Sakurai T."/>
            <person name="Satou M."/>
            <person name="Tamse R."/>
            <person name="Vaysberg M."/>
            <person name="Wallender E.K."/>
            <person name="Wong C."/>
            <person name="Yamamura Y."/>
            <person name="Yuan S."/>
            <person name="Shinozaki K."/>
            <person name="Davis R.W."/>
            <person name="Theologis A."/>
            <person name="Ecker J.R."/>
        </authorList>
    </citation>
    <scope>NUCLEOTIDE SEQUENCE [LARGE SCALE MRNA] OF 577-1084</scope>
    <source>
        <strain>cv. Columbia</strain>
    </source>
</reference>
<reference key="5">
    <citation type="journal article" date="2000" name="Genome Biol.">
        <title>Higher plant cellulose synthases.</title>
        <authorList>
            <person name="Richmond T."/>
        </authorList>
    </citation>
    <scope>GENE FAMILY</scope>
    <scope>NOMENCLATURE</scope>
</reference>
<reference key="6">
    <citation type="journal article" date="2001" name="Proc. Natl. Acad. Sci. U.S.A.">
        <title>Modifications of cellulose synthase confer resistance to isoxaben and thiazolidinone herbicides in Arabidopsis Ixr1 mutants.</title>
        <authorList>
            <person name="Scheible W.-R."/>
            <person name="Eshed R."/>
            <person name="Richmond T."/>
            <person name="Delmer D."/>
            <person name="Somerville C."/>
        </authorList>
    </citation>
    <scope>TISSUE SPECIFICITY</scope>
</reference>
<reference key="7">
    <citation type="journal article" date="2002" name="Plant Physiol.">
        <title>Functional analysis of the cellulose synthase genes CesA1, CesA2, and CesA3 in Arabidopsis.</title>
        <authorList>
            <person name="Burn J.E."/>
            <person name="Hocart C.H."/>
            <person name="Birch R.J."/>
            <person name="Cork A.C."/>
            <person name="Williamson R.E."/>
        </authorList>
    </citation>
    <scope>FUNCTION</scope>
    <scope>TISSUE SPECIFICITY</scope>
</reference>
<reference key="8">
    <citation type="journal article" date="2002" name="Plant Physiol.">
        <title>Genetic complexity of cellulose synthase A gene function in Arabidopsis embryogenesis.</title>
        <authorList>
            <person name="Beeckman T."/>
            <person name="Przemeck G.K.H."/>
            <person name="Stamatiou G."/>
            <person name="Lau R."/>
            <person name="Terryn N."/>
            <person name="De Rycke R."/>
            <person name="Inze D."/>
            <person name="Berleth T."/>
        </authorList>
    </citation>
    <scope>TISSUE SPECIFICITY</scope>
    <scope>DEVELOPMENTAL STAGE</scope>
</reference>
<reference key="9">
    <citation type="journal article" date="2007" name="Plant Physiol.">
        <title>Knockout of the AtCESA2 gene affects microtubule orientation and causes abnormal cell expansion in Arabidopsis.</title>
        <authorList>
            <person name="Chu Z."/>
            <person name="Chen H."/>
            <person name="Zhang Y."/>
            <person name="Zhang Z."/>
            <person name="Zheng N."/>
            <person name="Yin B."/>
            <person name="Yan H."/>
            <person name="Zhu L."/>
            <person name="Zhao X."/>
            <person name="Yuan M."/>
            <person name="Zhang X."/>
            <person name="Xie Q."/>
        </authorList>
    </citation>
    <scope>FUNCTION</scope>
    <scope>SUBUNIT</scope>
    <scope>TISSUE SPECIFICITY</scope>
    <scope>DISRUPTION PHENOTYPE</scope>
</reference>
<reference key="10">
    <citation type="journal article" date="2007" name="Proc. Natl. Acad. Sci. U.S.A.">
        <title>Organization of cellulose synthase complexes involved in primary cell wall synthesis in Arabidopsis thaliana.</title>
        <authorList>
            <person name="Desprez T."/>
            <person name="Juraniec M."/>
            <person name="Crowell E.F."/>
            <person name="Jouy H."/>
            <person name="Pochylova Z."/>
            <person name="Parcy F."/>
            <person name="Hoefte H."/>
            <person name="Gonneau M."/>
            <person name="Vernhettes S."/>
        </authorList>
    </citation>
    <scope>FUNCTION</scope>
</reference>
<comment type="function">
    <text evidence="9 11 12">Catalytic subunit of cellulose synthase terminal complexes ('rosettes'), required for beta-1,4-glucan microfibril crystallization, a major mechanism of the cell wall formation. Involved in the primary cell wall formation.</text>
</comment>
<comment type="catalytic activity">
    <reaction evidence="14">
        <text>[(1-&gt;4)-beta-D-glucosyl](n) + UDP-alpha-D-glucose = [(1-&gt;4)-beta-D-glucosyl](n+1) + UDP + H(+)</text>
        <dbReference type="Rhea" id="RHEA:19929"/>
        <dbReference type="Rhea" id="RHEA-COMP:10033"/>
        <dbReference type="Rhea" id="RHEA-COMP:10034"/>
        <dbReference type="ChEBI" id="CHEBI:15378"/>
        <dbReference type="ChEBI" id="CHEBI:18246"/>
        <dbReference type="ChEBI" id="CHEBI:58223"/>
        <dbReference type="ChEBI" id="CHEBI:58885"/>
        <dbReference type="EC" id="2.4.1.12"/>
    </reaction>
</comment>
<comment type="cofactor">
    <cofactor evidence="2">
        <name>Mn(2+)</name>
        <dbReference type="ChEBI" id="CHEBI:29035"/>
    </cofactor>
</comment>
<comment type="cofactor">
    <cofactor evidence="3">
        <name>Zn(2+)</name>
        <dbReference type="ChEBI" id="CHEBI:29105"/>
    </cofactor>
    <text evidence="3">Binds 2 Zn(2+) ions per subunit.</text>
</comment>
<comment type="pathway">
    <text>Glycan metabolism; plant cellulose biosynthesis.</text>
</comment>
<comment type="subunit">
    <text evidence="15">Homodimer. Interaction through zinc finger domain.</text>
</comment>
<comment type="subcellular location">
    <subcellularLocation>
        <location evidence="14">Cell membrane</location>
        <topology evidence="14">Multi-pass membrane protein</topology>
    </subcellularLocation>
</comment>
<comment type="tissue specificity">
    <text evidence="8 9 10 11">Strongly and ubiquitously expressed. Localized in some dividing and expanding cells, as well as in vascular tissues.</text>
</comment>
<comment type="developmental stage">
    <text evidence="10">Expressed throughout the embryo during all steps of embryogenesis, and decrease toward the bent-cotyledon stage.</text>
</comment>
<comment type="disruption phenotype">
    <text evidence="11">Plants display reduced cellulose synthesis affecting microtubule orientation, general cell size, hypocotyl growth and seeds production. Partially redundant with CESA6.</text>
</comment>
<comment type="similarity">
    <text evidence="14">Belongs to the glycosyltransferase 2 family. Plant cellulose synthase subfamily.</text>
</comment>
<comment type="sequence caution" evidence="14">
    <conflict type="erroneous initiation">
        <sequence resource="EMBL-CDS" id="AAL24340"/>
    </conflict>
</comment>
<keyword id="KW-0007">Acetylation</keyword>
<keyword id="KW-1003">Cell membrane</keyword>
<keyword id="KW-0961">Cell wall biogenesis/degradation</keyword>
<keyword id="KW-0135">Cellulose biosynthesis</keyword>
<keyword id="KW-0175">Coiled coil</keyword>
<keyword id="KW-0325">Glycoprotein</keyword>
<keyword id="KW-0328">Glycosyltransferase</keyword>
<keyword id="KW-0464">Manganese</keyword>
<keyword id="KW-0472">Membrane</keyword>
<keyword id="KW-0479">Metal-binding</keyword>
<keyword id="KW-1185">Reference proteome</keyword>
<keyword id="KW-0808">Transferase</keyword>
<keyword id="KW-0812">Transmembrane</keyword>
<keyword id="KW-1133">Transmembrane helix</keyword>
<keyword id="KW-0862">Zinc</keyword>
<keyword id="KW-0863">Zinc-finger</keyword>
<feature type="chain" id="PRO_0000166368" description="Cellulose synthase A catalytic subunit 2 [UDP-forming]">
    <location>
        <begin position="1"/>
        <end position="1084"/>
    </location>
</feature>
<feature type="topological domain" description="Cytoplasmic" evidence="4">
    <location>
        <begin position="1"/>
        <end position="278"/>
    </location>
</feature>
<feature type="transmembrane region" description="Helical" evidence="4">
    <location>
        <begin position="279"/>
        <end position="299"/>
    </location>
</feature>
<feature type="topological domain" description="Extracellular" evidence="4">
    <location>
        <begin position="300"/>
        <end position="301"/>
    </location>
</feature>
<feature type="transmembrane region" description="Helical" evidence="4">
    <location>
        <begin position="302"/>
        <end position="322"/>
    </location>
</feature>
<feature type="topological domain" description="Cytoplasmic" evidence="4">
    <location>
        <begin position="323"/>
        <end position="867"/>
    </location>
</feature>
<feature type="transmembrane region" description="Helical" evidence="4">
    <location>
        <begin position="868"/>
        <end position="888"/>
    </location>
</feature>
<feature type="topological domain" description="Extracellular" evidence="4">
    <location>
        <begin position="889"/>
        <end position="893"/>
    </location>
</feature>
<feature type="transmembrane region" description="Helical" evidence="4">
    <location>
        <begin position="894"/>
        <end position="914"/>
    </location>
</feature>
<feature type="topological domain" description="Cytoplasmic" evidence="4">
    <location>
        <begin position="915"/>
        <end position="929"/>
    </location>
</feature>
<feature type="transmembrane region" description="Helical" evidence="4">
    <location>
        <begin position="930"/>
        <end position="950"/>
    </location>
</feature>
<feature type="topological domain" description="Extracellular" evidence="4">
    <location>
        <begin position="951"/>
        <end position="979"/>
    </location>
</feature>
<feature type="transmembrane region" description="Helical" evidence="4">
    <location>
        <begin position="980"/>
        <end position="1000"/>
    </location>
</feature>
<feature type="topological domain" description="Cytoplasmic" evidence="4">
    <location>
        <begin position="1001"/>
        <end position="1011"/>
    </location>
</feature>
<feature type="transmembrane region" description="Helical" evidence="4">
    <location>
        <begin position="1012"/>
        <end position="1032"/>
    </location>
</feature>
<feature type="topological domain" description="Extracellular" evidence="4">
    <location>
        <begin position="1033"/>
        <end position="1041"/>
    </location>
</feature>
<feature type="transmembrane region" description="Helical" evidence="4">
    <location>
        <begin position="1042"/>
        <end position="1062"/>
    </location>
</feature>
<feature type="topological domain" description="Cytoplasmic" evidence="4">
    <location>
        <begin position="1063"/>
        <end position="1084"/>
    </location>
</feature>
<feature type="zinc finger region" description="RING-type; degenerate" evidence="5">
    <location>
        <begin position="39"/>
        <end position="85"/>
    </location>
</feature>
<feature type="region of interest" description="Disordered" evidence="7">
    <location>
        <begin position="230"/>
        <end position="259"/>
    </location>
</feature>
<feature type="coiled-coil region" evidence="4">
    <location>
        <begin position="451"/>
        <end position="477"/>
    </location>
</feature>
<feature type="active site" evidence="4">
    <location>
        <position position="397"/>
    </location>
</feature>
<feature type="active site" evidence="4">
    <location>
        <position position="784"/>
    </location>
</feature>
<feature type="binding site" evidence="3">
    <location>
        <position position="39"/>
    </location>
    <ligand>
        <name>Zn(2+)</name>
        <dbReference type="ChEBI" id="CHEBI:29105"/>
        <label>1</label>
    </ligand>
</feature>
<feature type="binding site" evidence="3">
    <location>
        <position position="42"/>
    </location>
    <ligand>
        <name>Zn(2+)</name>
        <dbReference type="ChEBI" id="CHEBI:29105"/>
        <label>1</label>
    </ligand>
</feature>
<feature type="binding site" evidence="3">
    <location>
        <position position="58"/>
    </location>
    <ligand>
        <name>Zn(2+)</name>
        <dbReference type="ChEBI" id="CHEBI:29105"/>
        <label>2</label>
    </ligand>
</feature>
<feature type="binding site" evidence="3">
    <location>
        <position position="61"/>
    </location>
    <ligand>
        <name>Zn(2+)</name>
        <dbReference type="ChEBI" id="CHEBI:29105"/>
        <label>2</label>
    </ligand>
</feature>
<feature type="binding site" evidence="3">
    <location>
        <position position="66"/>
    </location>
    <ligand>
        <name>Zn(2+)</name>
        <dbReference type="ChEBI" id="CHEBI:29105"/>
        <label>1</label>
    </ligand>
</feature>
<feature type="binding site" evidence="3">
    <location>
        <position position="69"/>
    </location>
    <ligand>
        <name>Zn(2+)</name>
        <dbReference type="ChEBI" id="CHEBI:29105"/>
        <label>1</label>
    </ligand>
</feature>
<feature type="binding site" evidence="3">
    <location>
        <position position="81"/>
    </location>
    <ligand>
        <name>Zn(2+)</name>
        <dbReference type="ChEBI" id="CHEBI:29105"/>
        <label>2</label>
    </ligand>
</feature>
<feature type="binding site" evidence="3">
    <location>
        <position position="84"/>
    </location>
    <ligand>
        <name>Zn(2+)</name>
        <dbReference type="ChEBI" id="CHEBI:29105"/>
        <label>2</label>
    </ligand>
</feature>
<feature type="binding site" evidence="2">
    <location>
        <position position="361"/>
    </location>
    <ligand>
        <name>UDP-alpha-D-glucose</name>
        <dbReference type="ChEBI" id="CHEBI:58885"/>
    </ligand>
</feature>
<feature type="binding site" evidence="2">
    <location>
        <position position="367"/>
    </location>
    <ligand>
        <name>UDP-alpha-D-glucose</name>
        <dbReference type="ChEBI" id="CHEBI:58885"/>
    </ligand>
</feature>
<feature type="binding site" evidence="2">
    <location>
        <position position="368"/>
    </location>
    <ligand>
        <name>UDP-alpha-D-glucose</name>
        <dbReference type="ChEBI" id="CHEBI:58885"/>
    </ligand>
</feature>
<feature type="binding site" evidence="2">
    <location>
        <position position="397"/>
    </location>
    <ligand>
        <name>UDP-alpha-D-glucose</name>
        <dbReference type="ChEBI" id="CHEBI:58885"/>
    </ligand>
</feature>
<feature type="binding site" evidence="2">
    <location>
        <position position="538"/>
    </location>
    <ligand>
        <name>UDP-alpha-D-glucose</name>
        <dbReference type="ChEBI" id="CHEBI:58885"/>
    </ligand>
</feature>
<feature type="binding site" evidence="2">
    <location>
        <position position="539"/>
    </location>
    <ligand>
        <name>Mn(2+)</name>
        <dbReference type="ChEBI" id="CHEBI:29035"/>
    </ligand>
</feature>
<feature type="binding site" evidence="2">
    <location>
        <position position="563"/>
    </location>
    <ligand>
        <name>Mn(2+)</name>
        <dbReference type="ChEBI" id="CHEBI:29035"/>
    </ligand>
</feature>
<feature type="modified residue" description="N-acetylmethionine" evidence="1">
    <location>
        <position position="1"/>
    </location>
</feature>
<feature type="glycosylation site" description="N-linked (GlcNAc...) asparagine" evidence="6">
    <location>
        <position position="957"/>
    </location>
</feature>